<dbReference type="EMBL" id="AJ278999">
    <property type="protein sequence ID" value="CAC08507.1"/>
    <property type="molecule type" value="mRNA"/>
</dbReference>
<dbReference type="EMBL" id="BC057324">
    <property type="protein sequence ID" value="AAH57324.1"/>
    <property type="molecule type" value="mRNA"/>
</dbReference>
<dbReference type="CCDS" id="CCDS35910.1"/>
<dbReference type="RefSeq" id="NP_443720.1">
    <property type="nucleotide sequence ID" value="NM_052994.2"/>
</dbReference>
<dbReference type="SMR" id="Q9ER58"/>
<dbReference type="FunCoup" id="Q9ER58">
    <property type="interactions" value="228"/>
</dbReference>
<dbReference type="STRING" id="10090.ENSMUSP00000113115"/>
<dbReference type="MEROPS" id="I31.954"/>
<dbReference type="GlyConnect" id="2758">
    <property type="glycosylation" value="7 N-Linked glycans (1 site)"/>
</dbReference>
<dbReference type="GlyCosmos" id="Q9ER58">
    <property type="glycosylation" value="3 sites, 7 glycans"/>
</dbReference>
<dbReference type="GlyGen" id="Q9ER58">
    <property type="glycosylation" value="3 sites, 8 N-linked glycans (1 site)"/>
</dbReference>
<dbReference type="iPTMnet" id="Q9ER58"/>
<dbReference type="PhosphoSitePlus" id="Q9ER58"/>
<dbReference type="SwissPalm" id="Q9ER58"/>
<dbReference type="jPOST" id="Q9ER58"/>
<dbReference type="PaxDb" id="10090-ENSMUSP00000113115"/>
<dbReference type="ProteomicsDB" id="259024"/>
<dbReference type="Antibodypedia" id="29217">
    <property type="antibodies" value="100 antibodies from 23 providers"/>
</dbReference>
<dbReference type="DNASU" id="94214"/>
<dbReference type="Ensembl" id="ENSMUST00000121820.9">
    <property type="protein sequence ID" value="ENSMUSP00000113115.3"/>
    <property type="gene ID" value="ENSMUSG00000058297.17"/>
</dbReference>
<dbReference type="GeneID" id="94214"/>
<dbReference type="KEGG" id="mmu:94214"/>
<dbReference type="UCSC" id="uc007fek.1">
    <property type="organism name" value="mouse"/>
</dbReference>
<dbReference type="AGR" id="MGI:1891351"/>
<dbReference type="CTD" id="9806"/>
<dbReference type="MGI" id="MGI:1891351">
    <property type="gene designation" value="Spock2"/>
</dbReference>
<dbReference type="VEuPathDB" id="HostDB:ENSMUSG00000058297"/>
<dbReference type="eggNOG" id="KOG3555">
    <property type="taxonomic scope" value="Eukaryota"/>
</dbReference>
<dbReference type="GeneTree" id="ENSGT00940000157107"/>
<dbReference type="HOGENOM" id="CLU_037217_1_0_1"/>
<dbReference type="InParanoid" id="Q9ER58"/>
<dbReference type="OMA" id="AMCINRK"/>
<dbReference type="OrthoDB" id="8875634at2759"/>
<dbReference type="PhylomeDB" id="Q9ER58"/>
<dbReference type="TreeFam" id="TF317779"/>
<dbReference type="BioGRID-ORCS" id="94214">
    <property type="hits" value="3 hits in 77 CRISPR screens"/>
</dbReference>
<dbReference type="PRO" id="PR:Q9ER58"/>
<dbReference type="Proteomes" id="UP000000589">
    <property type="component" value="Chromosome 10"/>
</dbReference>
<dbReference type="RNAct" id="Q9ER58">
    <property type="molecule type" value="protein"/>
</dbReference>
<dbReference type="Bgee" id="ENSMUSG00000058297">
    <property type="expression patterns" value="Expressed in habenula and 200 other cell types or tissues"/>
</dbReference>
<dbReference type="ExpressionAtlas" id="Q9ER58">
    <property type="expression patterns" value="baseline and differential"/>
</dbReference>
<dbReference type="GO" id="GO:0062023">
    <property type="term" value="C:collagen-containing extracellular matrix"/>
    <property type="evidence" value="ECO:0007005"/>
    <property type="project" value="BHF-UCL"/>
</dbReference>
<dbReference type="GO" id="GO:0005576">
    <property type="term" value="C:extracellular region"/>
    <property type="evidence" value="ECO:0007669"/>
    <property type="project" value="UniProtKB-KW"/>
</dbReference>
<dbReference type="GO" id="GO:0005509">
    <property type="term" value="F:calcium ion binding"/>
    <property type="evidence" value="ECO:0000250"/>
    <property type="project" value="UniProtKB"/>
</dbReference>
<dbReference type="GO" id="GO:0050840">
    <property type="term" value="F:extracellular matrix binding"/>
    <property type="evidence" value="ECO:0000314"/>
    <property type="project" value="MGI"/>
</dbReference>
<dbReference type="GO" id="GO:0005539">
    <property type="term" value="F:glycosaminoglycan binding"/>
    <property type="evidence" value="ECO:0000314"/>
    <property type="project" value="MGI"/>
</dbReference>
<dbReference type="GO" id="GO:1990830">
    <property type="term" value="P:cellular response to leukemia inhibitory factor"/>
    <property type="evidence" value="ECO:0000270"/>
    <property type="project" value="MGI"/>
</dbReference>
<dbReference type="GO" id="GO:0030198">
    <property type="term" value="P:extracellular matrix organization"/>
    <property type="evidence" value="ECO:0000314"/>
    <property type="project" value="MGI"/>
</dbReference>
<dbReference type="GO" id="GO:0010811">
    <property type="term" value="P:positive regulation of cell-substrate adhesion"/>
    <property type="evidence" value="ECO:0000314"/>
    <property type="project" value="MGI"/>
</dbReference>
<dbReference type="CDD" id="cd00104">
    <property type="entry name" value="KAZAL_FS"/>
    <property type="match status" value="1"/>
</dbReference>
<dbReference type="CDD" id="cd00191">
    <property type="entry name" value="TY"/>
    <property type="match status" value="1"/>
</dbReference>
<dbReference type="FunFam" id="1.10.238.10:FF:000101">
    <property type="entry name" value="SPARC/osteonectin, cwcv and kazal-like domains proteoglycan 2"/>
    <property type="match status" value="1"/>
</dbReference>
<dbReference type="FunFam" id="3.30.60.30:FF:000003">
    <property type="entry name" value="SPARC/osteonectin, cwcv and kazal-like domains proteoglycan 3"/>
    <property type="match status" value="1"/>
</dbReference>
<dbReference type="FunFam" id="4.10.800.10:FF:000001">
    <property type="entry name" value="Testican-3 isoform 2"/>
    <property type="match status" value="1"/>
</dbReference>
<dbReference type="Gene3D" id="3.30.60.30">
    <property type="match status" value="1"/>
</dbReference>
<dbReference type="Gene3D" id="1.10.238.10">
    <property type="entry name" value="EF-hand"/>
    <property type="match status" value="1"/>
</dbReference>
<dbReference type="Gene3D" id="4.10.800.10">
    <property type="entry name" value="Thyroglobulin type-1"/>
    <property type="match status" value="1"/>
</dbReference>
<dbReference type="InterPro" id="IPR011992">
    <property type="entry name" value="EF-hand-dom_pair"/>
</dbReference>
<dbReference type="InterPro" id="IPR002350">
    <property type="entry name" value="Kazal_dom"/>
</dbReference>
<dbReference type="InterPro" id="IPR036058">
    <property type="entry name" value="Kazal_dom_sf"/>
</dbReference>
<dbReference type="InterPro" id="IPR019577">
    <property type="entry name" value="SPARC/Testican_Ca-bd-dom"/>
</dbReference>
<dbReference type="InterPro" id="IPR000716">
    <property type="entry name" value="Thyroglobulin_1"/>
</dbReference>
<dbReference type="InterPro" id="IPR036857">
    <property type="entry name" value="Thyroglobulin_1_sf"/>
</dbReference>
<dbReference type="PANTHER" id="PTHR13866">
    <property type="entry name" value="SPARC OSTEONECTIN"/>
    <property type="match status" value="1"/>
</dbReference>
<dbReference type="PANTHER" id="PTHR13866:SF18">
    <property type="entry name" value="TESTICAN-2"/>
    <property type="match status" value="1"/>
</dbReference>
<dbReference type="Pfam" id="PF07648">
    <property type="entry name" value="Kazal_2"/>
    <property type="match status" value="1"/>
</dbReference>
<dbReference type="Pfam" id="PF10591">
    <property type="entry name" value="SPARC_Ca_bdg"/>
    <property type="match status" value="1"/>
</dbReference>
<dbReference type="Pfam" id="PF00086">
    <property type="entry name" value="Thyroglobulin_1"/>
    <property type="match status" value="1"/>
</dbReference>
<dbReference type="SMART" id="SM00280">
    <property type="entry name" value="KAZAL"/>
    <property type="match status" value="1"/>
</dbReference>
<dbReference type="SMART" id="SM00211">
    <property type="entry name" value="TY"/>
    <property type="match status" value="1"/>
</dbReference>
<dbReference type="SUPFAM" id="SSF47473">
    <property type="entry name" value="EF-hand"/>
    <property type="match status" value="1"/>
</dbReference>
<dbReference type="SUPFAM" id="SSF100895">
    <property type="entry name" value="Kazal-type serine protease inhibitors"/>
    <property type="match status" value="1"/>
</dbReference>
<dbReference type="SUPFAM" id="SSF57610">
    <property type="entry name" value="Thyroglobulin type-1 domain"/>
    <property type="match status" value="1"/>
</dbReference>
<dbReference type="PROSITE" id="PS51465">
    <property type="entry name" value="KAZAL_2"/>
    <property type="match status" value="1"/>
</dbReference>
<dbReference type="PROSITE" id="PS00484">
    <property type="entry name" value="THYROGLOBULIN_1_1"/>
    <property type="match status" value="1"/>
</dbReference>
<dbReference type="PROSITE" id="PS51162">
    <property type="entry name" value="THYROGLOBULIN_1_2"/>
    <property type="match status" value="1"/>
</dbReference>
<organism>
    <name type="scientific">Mus musculus</name>
    <name type="common">Mouse</name>
    <dbReference type="NCBI Taxonomy" id="10090"/>
    <lineage>
        <taxon>Eukaryota</taxon>
        <taxon>Metazoa</taxon>
        <taxon>Chordata</taxon>
        <taxon>Craniata</taxon>
        <taxon>Vertebrata</taxon>
        <taxon>Euteleostomi</taxon>
        <taxon>Mammalia</taxon>
        <taxon>Eutheria</taxon>
        <taxon>Euarchontoglires</taxon>
        <taxon>Glires</taxon>
        <taxon>Rodentia</taxon>
        <taxon>Myomorpha</taxon>
        <taxon>Muroidea</taxon>
        <taxon>Muridae</taxon>
        <taxon>Murinae</taxon>
        <taxon>Mus</taxon>
        <taxon>Mus</taxon>
    </lineage>
</organism>
<comment type="function">
    <text evidence="1">May participate in diverse steps of neurogenesis. Binds calcium (By similarity).</text>
</comment>
<comment type="subcellular location">
    <subcellularLocation>
        <location evidence="7">Secreted</location>
        <location evidence="7">Extracellular space</location>
        <location evidence="7">Extracellular matrix</location>
    </subcellularLocation>
</comment>
<comment type="tissue specificity">
    <text>Brain specific.</text>
</comment>
<comment type="PTM">
    <text evidence="1">O-glycosylated; contains chondroitin sulfate and heparan sulfate.</text>
</comment>
<gene>
    <name type="primary">Spock2</name>
    <name type="synonym">Ticn2</name>
</gene>
<feature type="signal peptide" evidence="3">
    <location>
        <begin position="1"/>
        <end position="22"/>
    </location>
</feature>
<feature type="chain" id="PRO_0000026702" description="Testican-2">
    <location>
        <begin position="23"/>
        <end position="423"/>
    </location>
</feature>
<feature type="domain" description="Kazal-like" evidence="5">
    <location>
        <begin position="130"/>
        <end position="182"/>
    </location>
</feature>
<feature type="domain" description="Thyroglobulin type-1" evidence="4">
    <location>
        <begin position="309"/>
        <end position="375"/>
    </location>
</feature>
<feature type="region of interest" description="Disordered" evidence="6">
    <location>
        <begin position="387"/>
        <end position="423"/>
    </location>
</feature>
<feature type="compositionally biased region" description="Acidic residues" evidence="6">
    <location>
        <begin position="391"/>
        <end position="423"/>
    </location>
</feature>
<feature type="modified residue" description="Phosphoserine" evidence="2">
    <location>
        <position position="72"/>
    </location>
</feature>
<feature type="glycosylation site" description="N-linked (GlcNAc...) asparagine" evidence="3">
    <location>
        <position position="225"/>
    </location>
</feature>
<feature type="glycosylation site" description="O-linked (Xyl...) (glycosaminoglycan) serine" evidence="3">
    <location>
        <position position="382"/>
    </location>
</feature>
<feature type="glycosylation site" description="O-linked (Xyl...) (glycosaminoglycan) serine" evidence="3">
    <location>
        <position position="387"/>
    </location>
</feature>
<feature type="disulfide bond" evidence="1">
    <location>
        <begin position="90"/>
        <end position="101"/>
    </location>
</feature>
<feature type="disulfide bond" evidence="1">
    <location>
        <begin position="95"/>
        <end position="111"/>
    </location>
</feature>
<feature type="disulfide bond" evidence="1">
    <location>
        <begin position="136"/>
        <end position="166"/>
    </location>
</feature>
<feature type="disulfide bond" evidence="1">
    <location>
        <begin position="139"/>
        <end position="159"/>
    </location>
</feature>
<feature type="disulfide bond" evidence="1">
    <location>
        <begin position="148"/>
        <end position="180"/>
    </location>
</feature>
<feature type="disulfide bond" evidence="1">
    <location>
        <begin position="312"/>
        <end position="336"/>
    </location>
</feature>
<feature type="disulfide bond" evidence="1">
    <location>
        <begin position="347"/>
        <end position="354"/>
    </location>
</feature>
<feature type="disulfide bond" evidence="1">
    <location>
        <begin position="356"/>
        <end position="375"/>
    </location>
</feature>
<protein>
    <recommendedName>
        <fullName>Testican-2</fullName>
    </recommendedName>
    <alternativeName>
        <fullName>SPARC/osteonectin, CWCV, and Kazal-like domains proteoglycan 2</fullName>
    </alternativeName>
</protein>
<reference key="1">
    <citation type="submission" date="2000-09" db="EMBL/GenBank/DDBJ databases">
        <title>Cloning of mouse testican-2.</title>
        <authorList>
            <person name="Hartmann U."/>
            <person name="Paulsson M."/>
            <person name="Maurer P."/>
        </authorList>
    </citation>
    <scope>NUCLEOTIDE SEQUENCE [MRNA]</scope>
    <source>
        <tissue>Brain</tissue>
    </source>
</reference>
<reference key="2">
    <citation type="journal article" date="2004" name="Genome Res.">
        <title>The status, quality, and expansion of the NIH full-length cDNA project: the Mammalian Gene Collection (MGC).</title>
        <authorList>
            <consortium name="The MGC Project Team"/>
        </authorList>
    </citation>
    <scope>NUCLEOTIDE SEQUENCE [LARGE SCALE MRNA]</scope>
    <source>
        <strain>C57BL/6J</strain>
        <tissue>Brain</tissue>
    </source>
</reference>
<reference key="3">
    <citation type="journal article" date="2010" name="Cell">
        <title>A tissue-specific atlas of mouse protein phosphorylation and expression.</title>
        <authorList>
            <person name="Huttlin E.L."/>
            <person name="Jedrychowski M.P."/>
            <person name="Elias J.E."/>
            <person name="Goswami T."/>
            <person name="Rad R."/>
            <person name="Beausoleil S.A."/>
            <person name="Villen J."/>
            <person name="Haas W."/>
            <person name="Sowa M.E."/>
            <person name="Gygi S.P."/>
        </authorList>
    </citation>
    <scope>IDENTIFICATION BY MASS SPECTROMETRY [LARGE SCALE ANALYSIS]</scope>
    <source>
        <tissue>Brain</tissue>
    </source>
</reference>
<keyword id="KW-0106">Calcium</keyword>
<keyword id="KW-1015">Disulfide bond</keyword>
<keyword id="KW-0272">Extracellular matrix</keyword>
<keyword id="KW-0325">Glycoprotein</keyword>
<keyword id="KW-0357">Heparan sulfate</keyword>
<keyword id="KW-0597">Phosphoprotein</keyword>
<keyword id="KW-0654">Proteoglycan</keyword>
<keyword id="KW-1185">Reference proteome</keyword>
<keyword id="KW-0964">Secreted</keyword>
<keyword id="KW-0732">Signal</keyword>
<name>TICN2_MOUSE</name>
<accession>Q9ER58</accession>
<evidence type="ECO:0000250" key="1"/>
<evidence type="ECO:0000250" key="2">
    <source>
        <dbReference type="UniProtKB" id="Q92563"/>
    </source>
</evidence>
<evidence type="ECO:0000255" key="3"/>
<evidence type="ECO:0000255" key="4">
    <source>
        <dbReference type="PROSITE-ProRule" id="PRU00500"/>
    </source>
</evidence>
<evidence type="ECO:0000255" key="5">
    <source>
        <dbReference type="PROSITE-ProRule" id="PRU00798"/>
    </source>
</evidence>
<evidence type="ECO:0000256" key="6">
    <source>
        <dbReference type="SAM" id="MobiDB-lite"/>
    </source>
</evidence>
<evidence type="ECO:0000305" key="7"/>
<sequence>MRAPGSGRLALPLLLLAVVALAEGDAKGLKEGETPGNFMEDEQWLSSISQYSGKIKHWNRFRDEVEDDYIKSWEDNQQGDEALDTTKDPCQKVKCSRHKVCVAQGYQRAMCISRKKLEHRIKQPSLKLHGGKDSVCKPCHMAQLASVCGSDGHTYSSVCKLEQQACLSSKQLAVRCEGPCPCPTEQSTASTTDSKSETCTGQDLADLGDRLRDWFQLLRENSKQNGSANSATNPAGLDKSLGASCKDSIGWMFSKLDTSGDLFLDQTELAAINLDKYEVCIRPFFNSCDTYKDGRVSTAEWCFCFWREKPPCLAELERTQIQEAAKKKPGVFIPSCDEDGYYRKMQCDQSRGDCWCVDQLGLELTGTRMHGTPDCDDIVGFSGDFGSGVGWEDEEEKETEEAGEEAEEEEGEAGEADDGGYIW</sequence>
<proteinExistence type="evidence at protein level"/>